<reference key="1">
    <citation type="journal article" date="1997" name="Dev. Genes Evol.">
        <title>A rat homeobox gene, rNKx-2.5, is a homologue of the tinman gene in Drosophila and is mainly expressed during heart development.</title>
        <authorList>
            <person name="Fu Y."/>
            <person name="Ruiz-Lozano P."/>
            <person name="Evans S.M."/>
        </authorList>
    </citation>
    <scope>NUCLEOTIDE SEQUENCE [MRNA]</scope>
    <source>
        <tissue>Heart</tissue>
    </source>
</reference>
<accession>O35767</accession>
<evidence type="ECO:0000250" key="1">
    <source>
        <dbReference type="UniProtKB" id="P42582"/>
    </source>
</evidence>
<evidence type="ECO:0000250" key="2">
    <source>
        <dbReference type="UniProtKB" id="P52952"/>
    </source>
</evidence>
<evidence type="ECO:0000255" key="3">
    <source>
        <dbReference type="PROSITE-ProRule" id="PRU00108"/>
    </source>
</evidence>
<evidence type="ECO:0000305" key="4"/>
<feature type="chain" id="PRO_0000048939" description="Homeobox protein Nkx-2.5">
    <location>
        <begin position="1"/>
        <end position="318"/>
    </location>
</feature>
<feature type="DNA-binding region" description="Homeobox" evidence="2 3">
    <location>
        <begin position="137"/>
        <end position="196"/>
    </location>
</feature>
<gene>
    <name type="primary">Nkx2-5</name>
    <name type="synonym">Csx</name>
    <name type="synonym">Nkx-2.5</name>
    <name type="synonym">Nkx2e</name>
</gene>
<keyword id="KW-0217">Developmental protein</keyword>
<keyword id="KW-0238">DNA-binding</keyword>
<keyword id="KW-0371">Homeobox</keyword>
<keyword id="KW-0539">Nucleus</keyword>
<keyword id="KW-1185">Reference proteome</keyword>
<sequence length="318" mass="34336">MFPSPALTHTPFSVKDILNLEQQQRSLAAGDLSARLEATLAPASCMLAAFKPDGYSGPEAAAPGLAELRAELGPAPSPPKCSPAFPTAPTFYPRAYGDPDPAKDPRADKKELCALQKAVELDKAETDGAERRRPRRRRKPRVLFSQAQVYELERRFKQQRYLSPAERDQLASVLKLTSTQVKIWFQNRRYKCKRQRQDQTLELLGPPPPPARRIAVPVLVRDGKPCLGDSAAYAPAYGLGLNAYGYNAYPYPGYGGAACSPAYSCAAYPAAPPAAHAPAASANSNFVNFGVGDLNTVQSPGMPQGNSGVSTLHGIRAW</sequence>
<name>NKX25_RAT</name>
<proteinExistence type="evidence at transcript level"/>
<dbReference type="EMBL" id="AF006664">
    <property type="protein sequence ID" value="AAB62696.1"/>
    <property type="molecule type" value="mRNA"/>
</dbReference>
<dbReference type="RefSeq" id="NP_446103.1">
    <property type="nucleotide sequence ID" value="NM_053651.1"/>
</dbReference>
<dbReference type="SMR" id="O35767"/>
<dbReference type="FunCoup" id="O35767">
    <property type="interactions" value="99"/>
</dbReference>
<dbReference type="STRING" id="10116.ENSRNOP00000028155"/>
<dbReference type="ChEMBL" id="CHEMBL4105991"/>
<dbReference type="PhosphoSitePlus" id="O35767"/>
<dbReference type="PaxDb" id="10116-ENSRNOP00000028155"/>
<dbReference type="GeneID" id="114109"/>
<dbReference type="KEGG" id="rno:114109"/>
<dbReference type="UCSC" id="RGD:620520">
    <property type="organism name" value="rat"/>
</dbReference>
<dbReference type="AGR" id="RGD:620520"/>
<dbReference type="CTD" id="1482"/>
<dbReference type="RGD" id="620520">
    <property type="gene designation" value="Nkx2-5"/>
</dbReference>
<dbReference type="eggNOG" id="KOG0842">
    <property type="taxonomic scope" value="Eukaryota"/>
</dbReference>
<dbReference type="InParanoid" id="O35767"/>
<dbReference type="PhylomeDB" id="O35767"/>
<dbReference type="PRO" id="PR:O35767"/>
<dbReference type="Proteomes" id="UP000002494">
    <property type="component" value="Unplaced"/>
</dbReference>
<dbReference type="GO" id="GO:0005737">
    <property type="term" value="C:cytoplasm"/>
    <property type="evidence" value="ECO:0000266"/>
    <property type="project" value="RGD"/>
</dbReference>
<dbReference type="GO" id="GO:1990664">
    <property type="term" value="C:Nkx-2.5 complex"/>
    <property type="evidence" value="ECO:0000266"/>
    <property type="project" value="RGD"/>
</dbReference>
<dbReference type="GO" id="GO:0005634">
    <property type="term" value="C:nucleus"/>
    <property type="evidence" value="ECO:0000266"/>
    <property type="project" value="RGD"/>
</dbReference>
<dbReference type="GO" id="GO:0032991">
    <property type="term" value="C:protein-containing complex"/>
    <property type="evidence" value="ECO:0000250"/>
    <property type="project" value="UniProtKB"/>
</dbReference>
<dbReference type="GO" id="GO:0032993">
    <property type="term" value="C:protein-DNA complex"/>
    <property type="evidence" value="ECO:0000250"/>
    <property type="project" value="UniProtKB"/>
</dbReference>
<dbReference type="GO" id="GO:0090575">
    <property type="term" value="C:RNA polymerase II transcription regulator complex"/>
    <property type="evidence" value="ECO:0000266"/>
    <property type="project" value="RGD"/>
</dbReference>
<dbReference type="GO" id="GO:0005667">
    <property type="term" value="C:transcription regulator complex"/>
    <property type="evidence" value="ECO:0000266"/>
    <property type="project" value="RGD"/>
</dbReference>
<dbReference type="GO" id="GO:0003682">
    <property type="term" value="F:chromatin binding"/>
    <property type="evidence" value="ECO:0000266"/>
    <property type="project" value="RGD"/>
</dbReference>
<dbReference type="GO" id="GO:0003677">
    <property type="term" value="F:DNA binding"/>
    <property type="evidence" value="ECO:0000266"/>
    <property type="project" value="RGD"/>
</dbReference>
<dbReference type="GO" id="GO:0001216">
    <property type="term" value="F:DNA-binding transcription activator activity"/>
    <property type="evidence" value="ECO:0000266"/>
    <property type="project" value="RGD"/>
</dbReference>
<dbReference type="GO" id="GO:0001228">
    <property type="term" value="F:DNA-binding transcription activator activity, RNA polymerase II-specific"/>
    <property type="evidence" value="ECO:0000266"/>
    <property type="project" value="RGD"/>
</dbReference>
<dbReference type="GO" id="GO:0003700">
    <property type="term" value="F:DNA-binding transcription factor activity"/>
    <property type="evidence" value="ECO:0000314"/>
    <property type="project" value="RGD"/>
</dbReference>
<dbReference type="GO" id="GO:0000981">
    <property type="term" value="F:DNA-binding transcription factor activity, RNA polymerase II-specific"/>
    <property type="evidence" value="ECO:0000266"/>
    <property type="project" value="RGD"/>
</dbReference>
<dbReference type="GO" id="GO:0042826">
    <property type="term" value="F:histone deacetylase binding"/>
    <property type="evidence" value="ECO:0000353"/>
    <property type="project" value="RGD"/>
</dbReference>
<dbReference type="GO" id="GO:0042802">
    <property type="term" value="F:identical protein binding"/>
    <property type="evidence" value="ECO:0000353"/>
    <property type="project" value="RGD"/>
</dbReference>
<dbReference type="GO" id="GO:0042803">
    <property type="term" value="F:protein homodimerization activity"/>
    <property type="evidence" value="ECO:0000266"/>
    <property type="project" value="RGD"/>
</dbReference>
<dbReference type="GO" id="GO:0000978">
    <property type="term" value="F:RNA polymerase II cis-regulatory region sequence-specific DNA binding"/>
    <property type="evidence" value="ECO:0000250"/>
    <property type="project" value="UniProtKB"/>
</dbReference>
<dbReference type="GO" id="GO:0061629">
    <property type="term" value="F:RNA polymerase II-specific DNA-binding transcription factor binding"/>
    <property type="evidence" value="ECO:0000266"/>
    <property type="project" value="RGD"/>
</dbReference>
<dbReference type="GO" id="GO:0043565">
    <property type="term" value="F:sequence-specific DNA binding"/>
    <property type="evidence" value="ECO:0000314"/>
    <property type="project" value="RGD"/>
</dbReference>
<dbReference type="GO" id="GO:1990837">
    <property type="term" value="F:sequence-specific double-stranded DNA binding"/>
    <property type="evidence" value="ECO:0000266"/>
    <property type="project" value="RGD"/>
</dbReference>
<dbReference type="GO" id="GO:0000976">
    <property type="term" value="F:transcription cis-regulatory region binding"/>
    <property type="evidence" value="ECO:0000250"/>
    <property type="project" value="UniProtKB"/>
</dbReference>
<dbReference type="GO" id="GO:0007512">
    <property type="term" value="P:adult heart development"/>
    <property type="evidence" value="ECO:0000266"/>
    <property type="project" value="RGD"/>
</dbReference>
<dbReference type="GO" id="GO:0006915">
    <property type="term" value="P:apoptotic process"/>
    <property type="evidence" value="ECO:0000266"/>
    <property type="project" value="RGD"/>
</dbReference>
<dbReference type="GO" id="GO:0003278">
    <property type="term" value="P:apoptotic process involved in heart morphogenesis"/>
    <property type="evidence" value="ECO:0000266"/>
    <property type="project" value="RGD"/>
</dbReference>
<dbReference type="GO" id="GO:0003228">
    <property type="term" value="P:atrial cardiac muscle tissue development"/>
    <property type="evidence" value="ECO:0000266"/>
    <property type="project" value="RGD"/>
</dbReference>
<dbReference type="GO" id="GO:0060413">
    <property type="term" value="P:atrial septum morphogenesis"/>
    <property type="evidence" value="ECO:0000266"/>
    <property type="project" value="RGD"/>
</dbReference>
<dbReference type="GO" id="GO:0060928">
    <property type="term" value="P:atrioventricular node cell development"/>
    <property type="evidence" value="ECO:0000266"/>
    <property type="project" value="RGD"/>
</dbReference>
<dbReference type="GO" id="GO:0060929">
    <property type="term" value="P:atrioventricular node cell fate commitment"/>
    <property type="evidence" value="ECO:0000266"/>
    <property type="project" value="RGD"/>
</dbReference>
<dbReference type="GO" id="GO:0003162">
    <property type="term" value="P:atrioventricular node development"/>
    <property type="evidence" value="ECO:0000266"/>
    <property type="project" value="RGD"/>
</dbReference>
<dbReference type="GO" id="GO:0003166">
    <property type="term" value="P:bundle of His development"/>
    <property type="evidence" value="ECO:0000266"/>
    <property type="project" value="RGD"/>
</dbReference>
<dbReference type="GO" id="GO:0003161">
    <property type="term" value="P:cardiac conduction system development"/>
    <property type="evidence" value="ECO:0000266"/>
    <property type="project" value="RGD"/>
</dbReference>
<dbReference type="GO" id="GO:0055013">
    <property type="term" value="P:cardiac muscle cell development"/>
    <property type="evidence" value="ECO:0000266"/>
    <property type="project" value="RGD"/>
</dbReference>
<dbReference type="GO" id="GO:0055007">
    <property type="term" value="P:cardiac muscle cell differentiation"/>
    <property type="evidence" value="ECO:0000270"/>
    <property type="project" value="RGD"/>
</dbReference>
<dbReference type="GO" id="GO:0060038">
    <property type="term" value="P:cardiac muscle cell proliferation"/>
    <property type="evidence" value="ECO:0000266"/>
    <property type="project" value="RGD"/>
</dbReference>
<dbReference type="GO" id="GO:0060048">
    <property type="term" value="P:cardiac muscle contraction"/>
    <property type="evidence" value="ECO:0000266"/>
    <property type="project" value="RGD"/>
</dbReference>
<dbReference type="GO" id="GO:0048738">
    <property type="term" value="P:cardiac muscle tissue development"/>
    <property type="evidence" value="ECO:0000266"/>
    <property type="project" value="RGD"/>
</dbReference>
<dbReference type="GO" id="GO:0055008">
    <property type="term" value="P:cardiac muscle tissue morphogenesis"/>
    <property type="evidence" value="ECO:0000266"/>
    <property type="project" value="RGD"/>
</dbReference>
<dbReference type="GO" id="GO:0060411">
    <property type="term" value="P:cardiac septum morphogenesis"/>
    <property type="evidence" value="ECO:0000266"/>
    <property type="project" value="RGD"/>
</dbReference>
<dbReference type="GO" id="GO:0003211">
    <property type="term" value="P:cardiac ventricle formation"/>
    <property type="evidence" value="ECO:0000266"/>
    <property type="project" value="RGD"/>
</dbReference>
<dbReference type="GO" id="GO:0003208">
    <property type="term" value="P:cardiac ventricle morphogenesis"/>
    <property type="evidence" value="ECO:0000266"/>
    <property type="project" value="RGD"/>
</dbReference>
<dbReference type="GO" id="GO:0030154">
    <property type="term" value="P:cell differentiation"/>
    <property type="evidence" value="ECO:0000318"/>
    <property type="project" value="GO_Central"/>
</dbReference>
<dbReference type="GO" id="GO:0008283">
    <property type="term" value="P:cell population proliferation"/>
    <property type="evidence" value="ECO:0000266"/>
    <property type="project" value="RGD"/>
</dbReference>
<dbReference type="GO" id="GO:0071363">
    <property type="term" value="P:cellular response to growth factor stimulus"/>
    <property type="evidence" value="ECO:0000270"/>
    <property type="project" value="RGD"/>
</dbReference>
<dbReference type="GO" id="GO:0070301">
    <property type="term" value="P:cellular response to hydrogen peroxide"/>
    <property type="evidence" value="ECO:0000270"/>
    <property type="project" value="RGD"/>
</dbReference>
<dbReference type="GO" id="GO:0035050">
    <property type="term" value="P:embryonic heart tube development"/>
    <property type="evidence" value="ECO:0000266"/>
    <property type="project" value="RGD"/>
</dbReference>
<dbReference type="GO" id="GO:0060971">
    <property type="term" value="P:embryonic heart tube left/right pattern formation"/>
    <property type="evidence" value="ECO:0000266"/>
    <property type="project" value="RGD"/>
</dbReference>
<dbReference type="GO" id="GO:1904019">
    <property type="term" value="P:epithelial cell apoptotic process"/>
    <property type="evidence" value="ECO:0000266"/>
    <property type="project" value="RGD"/>
</dbReference>
<dbReference type="GO" id="GO:0030855">
    <property type="term" value="P:epithelial cell differentiation"/>
    <property type="evidence" value="ECO:0000266"/>
    <property type="project" value="RGD"/>
</dbReference>
<dbReference type="GO" id="GO:0050673">
    <property type="term" value="P:epithelial cell proliferation"/>
    <property type="evidence" value="ECO:0000266"/>
    <property type="project" value="RGD"/>
</dbReference>
<dbReference type="GO" id="GO:0060047">
    <property type="term" value="P:heart contraction"/>
    <property type="evidence" value="ECO:0000266"/>
    <property type="project" value="RGD"/>
</dbReference>
<dbReference type="GO" id="GO:0007507">
    <property type="term" value="P:heart development"/>
    <property type="evidence" value="ECO:0000266"/>
    <property type="project" value="RGD"/>
</dbReference>
<dbReference type="GO" id="GO:0001947">
    <property type="term" value="P:heart looping"/>
    <property type="evidence" value="ECO:0000266"/>
    <property type="project" value="RGD"/>
</dbReference>
<dbReference type="GO" id="GO:0003007">
    <property type="term" value="P:heart morphogenesis"/>
    <property type="evidence" value="ECO:0000266"/>
    <property type="project" value="RGD"/>
</dbReference>
<dbReference type="GO" id="GO:0060347">
    <property type="term" value="P:heart trabecula formation"/>
    <property type="evidence" value="ECO:0000266"/>
    <property type="project" value="RGD"/>
</dbReference>
<dbReference type="GO" id="GO:0030097">
    <property type="term" value="P:hemopoiesis"/>
    <property type="evidence" value="ECO:0000266"/>
    <property type="project" value="RGD"/>
</dbReference>
<dbReference type="GO" id="GO:0090090">
    <property type="term" value="P:negative regulation of canonical Wnt signaling pathway"/>
    <property type="evidence" value="ECO:0000266"/>
    <property type="project" value="RGD"/>
</dbReference>
<dbReference type="GO" id="GO:0010667">
    <property type="term" value="P:negative regulation of cardiac muscle cell apoptotic process"/>
    <property type="evidence" value="ECO:0000266"/>
    <property type="project" value="RGD"/>
</dbReference>
<dbReference type="GO" id="GO:1904036">
    <property type="term" value="P:negative regulation of epithelial cell apoptotic process"/>
    <property type="evidence" value="ECO:0000266"/>
    <property type="project" value="RGD"/>
</dbReference>
<dbReference type="GO" id="GO:0010832">
    <property type="term" value="P:negative regulation of myotube differentiation"/>
    <property type="evidence" value="ECO:0000266"/>
    <property type="project" value="RGD"/>
</dbReference>
<dbReference type="GO" id="GO:0000122">
    <property type="term" value="P:negative regulation of transcription by RNA polymerase II"/>
    <property type="evidence" value="ECO:0000314"/>
    <property type="project" value="RGD"/>
</dbReference>
<dbReference type="GO" id="GO:0003151">
    <property type="term" value="P:outflow tract morphogenesis"/>
    <property type="evidence" value="ECO:0000266"/>
    <property type="project" value="RGD"/>
</dbReference>
<dbReference type="GO" id="GO:0003148">
    <property type="term" value="P:outflow tract septum morphogenesis"/>
    <property type="evidence" value="ECO:0000266"/>
    <property type="project" value="RGD"/>
</dbReference>
<dbReference type="GO" id="GO:0060037">
    <property type="term" value="P:pharyngeal system development"/>
    <property type="evidence" value="ECO:0000266"/>
    <property type="project" value="RGD"/>
</dbReference>
<dbReference type="GO" id="GO:0051891">
    <property type="term" value="P:positive regulation of cardioblast differentiation"/>
    <property type="evidence" value="ECO:0000266"/>
    <property type="project" value="RGD"/>
</dbReference>
<dbReference type="GO" id="GO:0045893">
    <property type="term" value="P:positive regulation of DNA-templated transcription"/>
    <property type="evidence" value="ECO:0000266"/>
    <property type="project" value="RGD"/>
</dbReference>
<dbReference type="GO" id="GO:0050679">
    <property type="term" value="P:positive regulation of epithelial cell proliferation"/>
    <property type="evidence" value="ECO:0000266"/>
    <property type="project" value="RGD"/>
</dbReference>
<dbReference type="GO" id="GO:0010628">
    <property type="term" value="P:positive regulation of gene expression"/>
    <property type="evidence" value="ECO:0000266"/>
    <property type="project" value="RGD"/>
</dbReference>
<dbReference type="GO" id="GO:0045823">
    <property type="term" value="P:positive regulation of heart contraction"/>
    <property type="evidence" value="ECO:0000266"/>
    <property type="project" value="RGD"/>
</dbReference>
<dbReference type="GO" id="GO:0045666">
    <property type="term" value="P:positive regulation of neuron differentiation"/>
    <property type="evidence" value="ECO:0000266"/>
    <property type="project" value="RGD"/>
</dbReference>
<dbReference type="GO" id="GO:0010765">
    <property type="term" value="P:positive regulation of sodium ion transport"/>
    <property type="evidence" value="ECO:0000266"/>
    <property type="project" value="RGD"/>
</dbReference>
<dbReference type="GO" id="GO:0045944">
    <property type="term" value="P:positive regulation of transcription by RNA polymerase II"/>
    <property type="evidence" value="ECO:0000250"/>
    <property type="project" value="UniProtKB"/>
</dbReference>
<dbReference type="GO" id="GO:0060261">
    <property type="term" value="P:positive regulation of transcription initiation by RNA polymerase II"/>
    <property type="evidence" value="ECO:0000266"/>
    <property type="project" value="RGD"/>
</dbReference>
<dbReference type="GO" id="GO:0003342">
    <property type="term" value="P:proepicardium development"/>
    <property type="evidence" value="ECO:0000266"/>
    <property type="project" value="RGD"/>
</dbReference>
<dbReference type="GO" id="GO:0003350">
    <property type="term" value="P:pulmonary myocardium development"/>
    <property type="evidence" value="ECO:0000266"/>
    <property type="project" value="RGD"/>
</dbReference>
<dbReference type="GO" id="GO:0003168">
    <property type="term" value="P:Purkinje myocyte differentiation"/>
    <property type="evidence" value="ECO:0000266"/>
    <property type="project" value="RGD"/>
</dbReference>
<dbReference type="GO" id="GO:1903779">
    <property type="term" value="P:regulation of cardiac conduction"/>
    <property type="evidence" value="ECO:0000266"/>
    <property type="project" value="RGD"/>
</dbReference>
<dbReference type="GO" id="GO:0060043">
    <property type="term" value="P:regulation of cardiac muscle cell proliferation"/>
    <property type="evidence" value="ECO:0000266"/>
    <property type="project" value="RGD"/>
</dbReference>
<dbReference type="GO" id="GO:0055117">
    <property type="term" value="P:regulation of cardiac muscle contraction"/>
    <property type="evidence" value="ECO:0000266"/>
    <property type="project" value="RGD"/>
</dbReference>
<dbReference type="GO" id="GO:0006355">
    <property type="term" value="P:regulation of DNA-templated transcription"/>
    <property type="evidence" value="ECO:0000266"/>
    <property type="project" value="RGD"/>
</dbReference>
<dbReference type="GO" id="GO:0006357">
    <property type="term" value="P:regulation of transcription by RNA polymerase II"/>
    <property type="evidence" value="ECO:0000266"/>
    <property type="project" value="RGD"/>
</dbReference>
<dbReference type="GO" id="GO:0032355">
    <property type="term" value="P:response to estradiol"/>
    <property type="evidence" value="ECO:0000270"/>
    <property type="project" value="RGD"/>
</dbReference>
<dbReference type="GO" id="GO:0003221">
    <property type="term" value="P:right ventricular cardiac muscle tissue morphogenesis"/>
    <property type="evidence" value="ECO:0000266"/>
    <property type="project" value="RGD"/>
</dbReference>
<dbReference type="GO" id="GO:0003285">
    <property type="term" value="P:septum secundum development"/>
    <property type="evidence" value="ECO:0000266"/>
    <property type="project" value="RGD"/>
</dbReference>
<dbReference type="GO" id="GO:0048536">
    <property type="term" value="P:spleen development"/>
    <property type="evidence" value="ECO:0000250"/>
    <property type="project" value="UniProtKB"/>
</dbReference>
<dbReference type="GO" id="GO:0030878">
    <property type="term" value="P:thyroid gland development"/>
    <property type="evidence" value="ECO:0000266"/>
    <property type="project" value="RGD"/>
</dbReference>
<dbReference type="GO" id="GO:0006366">
    <property type="term" value="P:transcription by RNA polymerase II"/>
    <property type="evidence" value="ECO:0000266"/>
    <property type="project" value="RGD"/>
</dbReference>
<dbReference type="GO" id="GO:0001570">
    <property type="term" value="P:vasculogenesis"/>
    <property type="evidence" value="ECO:0000266"/>
    <property type="project" value="RGD"/>
</dbReference>
<dbReference type="GO" id="GO:0055005">
    <property type="term" value="P:ventricular cardiac myofibril assembly"/>
    <property type="evidence" value="ECO:0000266"/>
    <property type="project" value="RGD"/>
</dbReference>
<dbReference type="GO" id="GO:0060412">
    <property type="term" value="P:ventricular septum morphogenesis"/>
    <property type="evidence" value="ECO:0000266"/>
    <property type="project" value="RGD"/>
</dbReference>
<dbReference type="GO" id="GO:0003222">
    <property type="term" value="P:ventricular trabecula myocardium morphogenesis"/>
    <property type="evidence" value="ECO:0000266"/>
    <property type="project" value="RGD"/>
</dbReference>
<dbReference type="CDD" id="cd00086">
    <property type="entry name" value="homeodomain"/>
    <property type="match status" value="1"/>
</dbReference>
<dbReference type="FunFam" id="1.10.10.60:FF:000078">
    <property type="entry name" value="NK2 homeobox 3"/>
    <property type="match status" value="1"/>
</dbReference>
<dbReference type="Gene3D" id="1.10.10.60">
    <property type="entry name" value="Homeodomain-like"/>
    <property type="match status" value="1"/>
</dbReference>
<dbReference type="InterPro" id="IPR001356">
    <property type="entry name" value="HD"/>
</dbReference>
<dbReference type="InterPro" id="IPR020479">
    <property type="entry name" value="HD_metazoa"/>
</dbReference>
<dbReference type="InterPro" id="IPR017970">
    <property type="entry name" value="Homeobox_CS"/>
</dbReference>
<dbReference type="InterPro" id="IPR050394">
    <property type="entry name" value="Homeobox_NK-like"/>
</dbReference>
<dbReference type="InterPro" id="IPR009057">
    <property type="entry name" value="Homeodomain-like_sf"/>
</dbReference>
<dbReference type="PANTHER" id="PTHR24340">
    <property type="entry name" value="HOMEOBOX PROTEIN NKX"/>
    <property type="match status" value="1"/>
</dbReference>
<dbReference type="PANTHER" id="PTHR24340:SF28">
    <property type="entry name" value="HOMEOBOX PROTEIN NKX-2.5"/>
    <property type="match status" value="1"/>
</dbReference>
<dbReference type="Pfam" id="PF00046">
    <property type="entry name" value="Homeodomain"/>
    <property type="match status" value="1"/>
</dbReference>
<dbReference type="PRINTS" id="PR00024">
    <property type="entry name" value="HOMEOBOX"/>
</dbReference>
<dbReference type="SMART" id="SM00389">
    <property type="entry name" value="HOX"/>
    <property type="match status" value="1"/>
</dbReference>
<dbReference type="SUPFAM" id="SSF46689">
    <property type="entry name" value="Homeodomain-like"/>
    <property type="match status" value="1"/>
</dbReference>
<dbReference type="PROSITE" id="PS00027">
    <property type="entry name" value="HOMEOBOX_1"/>
    <property type="match status" value="1"/>
</dbReference>
<dbReference type="PROSITE" id="PS50071">
    <property type="entry name" value="HOMEOBOX_2"/>
    <property type="match status" value="1"/>
</dbReference>
<protein>
    <recommendedName>
        <fullName>Homeobox protein Nkx-2.5</fullName>
        <shortName>rNKx-2.5</shortName>
    </recommendedName>
    <alternativeName>
        <fullName>Homeobox protein NK-2 homolog E</fullName>
    </alternativeName>
</protein>
<organism>
    <name type="scientific">Rattus norvegicus</name>
    <name type="common">Rat</name>
    <dbReference type="NCBI Taxonomy" id="10116"/>
    <lineage>
        <taxon>Eukaryota</taxon>
        <taxon>Metazoa</taxon>
        <taxon>Chordata</taxon>
        <taxon>Craniata</taxon>
        <taxon>Vertebrata</taxon>
        <taxon>Euteleostomi</taxon>
        <taxon>Mammalia</taxon>
        <taxon>Eutheria</taxon>
        <taxon>Euarchontoglires</taxon>
        <taxon>Glires</taxon>
        <taxon>Rodentia</taxon>
        <taxon>Myomorpha</taxon>
        <taxon>Muroidea</taxon>
        <taxon>Muridae</taxon>
        <taxon>Murinae</taxon>
        <taxon>Rattus</taxon>
    </lineage>
</organism>
<comment type="function">
    <text evidence="1 2">Transcription factor required for the development of the heart and the spleen (By similarity). During heart development, acts as a transcriptional activator of NPPA/ANF in cooperation with GATA4 (By similarity). May cooperate with TBX2 to negatively modulate expression of NPPA/ANF in the atrioventricular canal (By similarity). Binds to the core DNA motif of NPPA promoter. Together with PBX1, required for spleen development through a mechanism that involves CDKN2B repression (By similarity). Positively regulates transcription of genes such as COL3A1 and MMP2, resulting in increased pulmonary endothelial fibrosis in response to hypoxia (By similarity).</text>
</comment>
<comment type="subunit">
    <text evidence="1 2">Homodimer (via the homeobox); binds DNA as homodimer. Interacts (via the homeobox) with TBX5 (via the T-box); this complex binds DNA. Interacts with HIPK1 and HIPK2, but not HIPK3. Interacts with the C-terminal zinc finger of GATA4 through its homeobox domain. Also interacts with JARID2 which represses its ability to activate transcription of ANF. Interacts with FBLIM1. Interacts with TBX18. Interacts with histone methyltransferase NSD2 (via HMG box) (By similarity). Interacts with NEDD9 (By similarity). Interacts with TBX1 (By similarity).</text>
</comment>
<comment type="subcellular location">
    <subcellularLocation>
        <location evidence="1">Nucleus</location>
    </subcellularLocation>
</comment>
<comment type="domain">
    <text evidence="2">The homeobox domain binds to double-stranded DNA.</text>
</comment>
<comment type="similarity">
    <text evidence="4">Belongs to the NK-2 homeobox family.</text>
</comment>